<feature type="chain" id="PRO_0000169615" description="AsmA family protein YicH">
    <location>
        <begin position="1"/>
        <end position="569"/>
    </location>
</feature>
<feature type="topological domain" description="Cytoplasmic" evidence="4">
    <location>
        <begin position="1"/>
        <end position="6"/>
    </location>
</feature>
<feature type="transmembrane region" description="Helical" evidence="1">
    <location>
        <begin position="7"/>
        <end position="27"/>
    </location>
</feature>
<feature type="topological domain" description="Periplasmic" evidence="4">
    <location>
        <begin position="28"/>
        <end position="569"/>
    </location>
</feature>
<keyword id="KW-0997">Cell inner membrane</keyword>
<keyword id="KW-1003">Cell membrane</keyword>
<keyword id="KW-0472">Membrane</keyword>
<keyword id="KW-1185">Reference proteome</keyword>
<keyword id="KW-0812">Transmembrane</keyword>
<keyword id="KW-1133">Transmembrane helix</keyword>
<protein>
    <recommendedName>
        <fullName>AsmA family protein YicH</fullName>
    </recommendedName>
</protein>
<accession>P31433</accession>
<accession>P76722</accession>
<accession>Q2M7W8</accession>
<dbReference type="EMBL" id="L10328">
    <property type="protein sequence ID" value="AAA62008.1"/>
    <property type="molecule type" value="Genomic_DNA"/>
</dbReference>
<dbReference type="EMBL" id="U00096">
    <property type="protein sequence ID" value="AAC76679.1"/>
    <property type="molecule type" value="Genomic_DNA"/>
</dbReference>
<dbReference type="EMBL" id="AP009048">
    <property type="protein sequence ID" value="BAE77638.1"/>
    <property type="molecule type" value="Genomic_DNA"/>
</dbReference>
<dbReference type="PIR" id="A65167">
    <property type="entry name" value="A65167"/>
</dbReference>
<dbReference type="RefSeq" id="NP_418112.1">
    <property type="nucleotide sequence ID" value="NC_000913.3"/>
</dbReference>
<dbReference type="RefSeq" id="WP_001300954.1">
    <property type="nucleotide sequence ID" value="NZ_LN832404.1"/>
</dbReference>
<dbReference type="BioGRID" id="4262571">
    <property type="interactions" value="11"/>
</dbReference>
<dbReference type="DIP" id="DIP-12432N"/>
<dbReference type="FunCoup" id="P31433">
    <property type="interactions" value="57"/>
</dbReference>
<dbReference type="STRING" id="511145.b3655"/>
<dbReference type="TCDB" id="9.B.121.3.1">
    <property type="family name" value="the asma (asma) family"/>
</dbReference>
<dbReference type="jPOST" id="P31433"/>
<dbReference type="PaxDb" id="511145-b3655"/>
<dbReference type="EnsemblBacteria" id="AAC76679">
    <property type="protein sequence ID" value="AAC76679"/>
    <property type="gene ID" value="b3655"/>
</dbReference>
<dbReference type="GeneID" id="948171"/>
<dbReference type="KEGG" id="ecj:JW3630"/>
<dbReference type="KEGG" id="eco:b3655"/>
<dbReference type="KEGG" id="ecoc:C3026_19800"/>
<dbReference type="PATRIC" id="fig|511145.12.peg.3775"/>
<dbReference type="EchoBASE" id="EB1635"/>
<dbReference type="eggNOG" id="COG2982">
    <property type="taxonomic scope" value="Bacteria"/>
</dbReference>
<dbReference type="HOGENOM" id="CLU_033892_0_0_6"/>
<dbReference type="InParanoid" id="P31433"/>
<dbReference type="OMA" id="IQMSAGS"/>
<dbReference type="OrthoDB" id="7053268at2"/>
<dbReference type="PhylomeDB" id="P31433"/>
<dbReference type="BioCyc" id="EcoCyc:EG11684-MONOMER"/>
<dbReference type="PRO" id="PR:P31433"/>
<dbReference type="Proteomes" id="UP000000625">
    <property type="component" value="Chromosome"/>
</dbReference>
<dbReference type="InterPro" id="IPR007844">
    <property type="entry name" value="AsmA"/>
</dbReference>
<dbReference type="Pfam" id="PF05170">
    <property type="entry name" value="AsmA"/>
    <property type="match status" value="1"/>
</dbReference>
<name>YICH_ECOLI</name>
<comment type="subcellular location">
    <subcellularLocation>
        <location evidence="4">Cell inner membrane</location>
        <topology evidence="1">Single-pass membrane protein</topology>
    </subcellularLocation>
</comment>
<comment type="disruption phenotype">
    <text evidence="2">The mutant does not exhibit growth defects and does not show outer membrane permeability defects.</text>
</comment>
<comment type="similarity">
    <text evidence="3">Belongs to the AsmA family.</text>
</comment>
<gene>
    <name type="primary">yicH</name>
    <name type="ordered locus">b3655</name>
    <name type="ordered locus">JW3630</name>
</gene>
<reference key="1">
    <citation type="journal article" date="1993" name="Genomics">
        <title>DNA sequence and analysis of 136 kilobases of the Escherichia coli genome: organizational symmetry around the origin of replication.</title>
        <authorList>
            <person name="Burland V.D."/>
            <person name="Plunkett G. III"/>
            <person name="Daniels D.L."/>
            <person name="Blattner F.R."/>
        </authorList>
    </citation>
    <scope>NUCLEOTIDE SEQUENCE [LARGE SCALE GENOMIC DNA]</scope>
    <source>
        <strain>K12 / MG1655 / ATCC 47076</strain>
    </source>
</reference>
<reference key="2">
    <citation type="journal article" date="1997" name="Science">
        <title>The complete genome sequence of Escherichia coli K-12.</title>
        <authorList>
            <person name="Blattner F.R."/>
            <person name="Plunkett G. III"/>
            <person name="Bloch C.A."/>
            <person name="Perna N.T."/>
            <person name="Burland V."/>
            <person name="Riley M."/>
            <person name="Collado-Vides J."/>
            <person name="Glasner J.D."/>
            <person name="Rode C.K."/>
            <person name="Mayhew G.F."/>
            <person name="Gregor J."/>
            <person name="Davis N.W."/>
            <person name="Kirkpatrick H.A."/>
            <person name="Goeden M.A."/>
            <person name="Rose D.J."/>
            <person name="Mau B."/>
            <person name="Shao Y."/>
        </authorList>
    </citation>
    <scope>NUCLEOTIDE SEQUENCE [LARGE SCALE GENOMIC DNA]</scope>
    <source>
        <strain>K12 / MG1655 / ATCC 47076</strain>
    </source>
</reference>
<reference key="3">
    <citation type="journal article" date="2006" name="Mol. Syst. Biol.">
        <title>Highly accurate genome sequences of Escherichia coli K-12 strains MG1655 and W3110.</title>
        <authorList>
            <person name="Hayashi K."/>
            <person name="Morooka N."/>
            <person name="Yamamoto Y."/>
            <person name="Fujita K."/>
            <person name="Isono K."/>
            <person name="Choi S."/>
            <person name="Ohtsubo E."/>
            <person name="Baba T."/>
            <person name="Wanner B.L."/>
            <person name="Mori H."/>
            <person name="Horiuchi T."/>
        </authorList>
    </citation>
    <scope>NUCLEOTIDE SEQUENCE [LARGE SCALE GENOMIC DNA]</scope>
    <source>
        <strain>K12 / W3110 / ATCC 27325 / DSM 5911</strain>
    </source>
</reference>
<reference key="4">
    <citation type="journal article" date="2021" name="MBio">
        <title>YhdP, TamB, and YdbH Are Redundant but Essential for Growth and Lipid Homeostasis of the Gram-Negative Outer Membrane.</title>
        <authorList>
            <person name="Ruiz N."/>
            <person name="Davis R.M."/>
            <person name="Kumar S."/>
        </authorList>
    </citation>
    <scope>DISRUPTION PHENOTYPE</scope>
    <source>
        <strain>K12 / MG1655 / ATCC 47076</strain>
    </source>
</reference>
<organism>
    <name type="scientific">Escherichia coli (strain K12)</name>
    <dbReference type="NCBI Taxonomy" id="83333"/>
    <lineage>
        <taxon>Bacteria</taxon>
        <taxon>Pseudomonadati</taxon>
        <taxon>Pseudomonadota</taxon>
        <taxon>Gammaproteobacteria</taxon>
        <taxon>Enterobacterales</taxon>
        <taxon>Enterobacteriaceae</taxon>
        <taxon>Escherichia</taxon>
    </lineage>
</organism>
<proteinExistence type="inferred from homology"/>
<evidence type="ECO:0000255" key="1"/>
<evidence type="ECO:0000269" key="2">
    <source>
    </source>
</evidence>
<evidence type="ECO:0000305" key="3"/>
<evidence type="ECO:0000305" key="4">
    <source>
    </source>
</evidence>
<sequence length="569" mass="62272">MKFIGKLLLYILIALLVAIAGLYFLLQTRWGAEHISAWVSENSDYHLAFGAMDHRFSAPSHIVLENVTFGRDGQPATLVAKSVDIALSSRQLTEPRHVDTILLENGTLNLTDQTAPLPFKADRLQLRDMAFNSPNSEWKLSAQRVNGGVVPWSPKAGKVLGTKAQIQFSAGSLSLNDVPATNVLIEGSIDNDRVTLTNLGADIARGTLTGNAQRNADGSWQVENLRMADIRLQSEKSLTDFFAPLRSVPSLQIGRLEVIDARLQGPDWAVTDLDLSLRNMTFSKDDWQTQEGKLSMNASEFIYGSLHLFDPIINTEFSPQGVALRQFTSRWEGGMVRTSGNWLRDGKTLILDDAAIAGLEYTLPKNWQQLWMETTPGWLNSLQLKRFSASRNLIIDIDPDFPWQLTALDGYGANLTLVTDHKWGVWSGSANLNAAAATFNRVDVRRPSLALTANSSTVNISELSAFTEKGILEATASVSQTPQRQTHISLNGRGVPVNILQQWGWPELPLTGDGNIQLTASGDIQANVPLKPTVSGQLHAVNAAKQQVTQTMNAGIVSSGEVTSTEPVR</sequence>